<accession>Q0TKM1</accession>
<dbReference type="EC" id="2.2.1.7" evidence="1"/>
<dbReference type="EMBL" id="CP000247">
    <property type="protein sequence ID" value="ABG68510.1"/>
    <property type="molecule type" value="Genomic_DNA"/>
</dbReference>
<dbReference type="RefSeq" id="WP_000006805.1">
    <property type="nucleotide sequence ID" value="NC_008253.1"/>
</dbReference>
<dbReference type="SMR" id="Q0TKM1"/>
<dbReference type="KEGG" id="ecp:ECP_0479"/>
<dbReference type="HOGENOM" id="CLU_009227_1_4_6"/>
<dbReference type="UniPathway" id="UPA00064">
    <property type="reaction ID" value="UER00091"/>
</dbReference>
<dbReference type="Proteomes" id="UP000009182">
    <property type="component" value="Chromosome"/>
</dbReference>
<dbReference type="GO" id="GO:0005829">
    <property type="term" value="C:cytosol"/>
    <property type="evidence" value="ECO:0007669"/>
    <property type="project" value="TreeGrafter"/>
</dbReference>
<dbReference type="GO" id="GO:0008661">
    <property type="term" value="F:1-deoxy-D-xylulose-5-phosphate synthase activity"/>
    <property type="evidence" value="ECO:0007669"/>
    <property type="project" value="UniProtKB-UniRule"/>
</dbReference>
<dbReference type="GO" id="GO:0000287">
    <property type="term" value="F:magnesium ion binding"/>
    <property type="evidence" value="ECO:0007669"/>
    <property type="project" value="UniProtKB-UniRule"/>
</dbReference>
<dbReference type="GO" id="GO:0030976">
    <property type="term" value="F:thiamine pyrophosphate binding"/>
    <property type="evidence" value="ECO:0007669"/>
    <property type="project" value="UniProtKB-UniRule"/>
</dbReference>
<dbReference type="GO" id="GO:0052865">
    <property type="term" value="P:1-deoxy-D-xylulose 5-phosphate biosynthetic process"/>
    <property type="evidence" value="ECO:0007669"/>
    <property type="project" value="UniProtKB-UniPathway"/>
</dbReference>
<dbReference type="GO" id="GO:0019288">
    <property type="term" value="P:isopentenyl diphosphate biosynthetic process, methylerythritol 4-phosphate pathway"/>
    <property type="evidence" value="ECO:0007669"/>
    <property type="project" value="TreeGrafter"/>
</dbReference>
<dbReference type="GO" id="GO:0016114">
    <property type="term" value="P:terpenoid biosynthetic process"/>
    <property type="evidence" value="ECO:0007669"/>
    <property type="project" value="UniProtKB-UniRule"/>
</dbReference>
<dbReference type="GO" id="GO:0009228">
    <property type="term" value="P:thiamine biosynthetic process"/>
    <property type="evidence" value="ECO:0007669"/>
    <property type="project" value="UniProtKB-UniRule"/>
</dbReference>
<dbReference type="CDD" id="cd02007">
    <property type="entry name" value="TPP_DXS"/>
    <property type="match status" value="1"/>
</dbReference>
<dbReference type="CDD" id="cd07033">
    <property type="entry name" value="TPP_PYR_DXS_TK_like"/>
    <property type="match status" value="1"/>
</dbReference>
<dbReference type="FunFam" id="3.40.50.920:FF:000002">
    <property type="entry name" value="1-deoxy-D-xylulose-5-phosphate synthase"/>
    <property type="match status" value="1"/>
</dbReference>
<dbReference type="FunFam" id="3.40.50.970:FF:000005">
    <property type="entry name" value="1-deoxy-D-xylulose-5-phosphate synthase"/>
    <property type="match status" value="1"/>
</dbReference>
<dbReference type="Gene3D" id="3.40.50.920">
    <property type="match status" value="1"/>
</dbReference>
<dbReference type="Gene3D" id="3.40.50.970">
    <property type="match status" value="2"/>
</dbReference>
<dbReference type="HAMAP" id="MF_00315">
    <property type="entry name" value="DXP_synth"/>
    <property type="match status" value="1"/>
</dbReference>
<dbReference type="InterPro" id="IPR005477">
    <property type="entry name" value="Dxylulose-5-P_synthase"/>
</dbReference>
<dbReference type="InterPro" id="IPR029061">
    <property type="entry name" value="THDP-binding"/>
</dbReference>
<dbReference type="InterPro" id="IPR009014">
    <property type="entry name" value="Transketo_C/PFOR_II"/>
</dbReference>
<dbReference type="InterPro" id="IPR005475">
    <property type="entry name" value="Transketolase-like_Pyr-bd"/>
</dbReference>
<dbReference type="InterPro" id="IPR020826">
    <property type="entry name" value="Transketolase_BS"/>
</dbReference>
<dbReference type="InterPro" id="IPR033248">
    <property type="entry name" value="Transketolase_C"/>
</dbReference>
<dbReference type="InterPro" id="IPR049557">
    <property type="entry name" value="Transketolase_CS"/>
</dbReference>
<dbReference type="NCBIfam" id="TIGR00204">
    <property type="entry name" value="dxs"/>
    <property type="match status" value="1"/>
</dbReference>
<dbReference type="NCBIfam" id="NF003933">
    <property type="entry name" value="PRK05444.2-2"/>
    <property type="match status" value="1"/>
</dbReference>
<dbReference type="PANTHER" id="PTHR43322">
    <property type="entry name" value="1-D-DEOXYXYLULOSE 5-PHOSPHATE SYNTHASE-RELATED"/>
    <property type="match status" value="1"/>
</dbReference>
<dbReference type="PANTHER" id="PTHR43322:SF5">
    <property type="entry name" value="1-DEOXY-D-XYLULOSE-5-PHOSPHATE SYNTHASE, CHLOROPLASTIC"/>
    <property type="match status" value="1"/>
</dbReference>
<dbReference type="Pfam" id="PF13292">
    <property type="entry name" value="DXP_synthase_N"/>
    <property type="match status" value="1"/>
</dbReference>
<dbReference type="Pfam" id="PF02779">
    <property type="entry name" value="Transket_pyr"/>
    <property type="match status" value="1"/>
</dbReference>
<dbReference type="Pfam" id="PF02780">
    <property type="entry name" value="Transketolase_C"/>
    <property type="match status" value="1"/>
</dbReference>
<dbReference type="SMART" id="SM00861">
    <property type="entry name" value="Transket_pyr"/>
    <property type="match status" value="1"/>
</dbReference>
<dbReference type="SUPFAM" id="SSF52518">
    <property type="entry name" value="Thiamin diphosphate-binding fold (THDP-binding)"/>
    <property type="match status" value="2"/>
</dbReference>
<dbReference type="SUPFAM" id="SSF52922">
    <property type="entry name" value="TK C-terminal domain-like"/>
    <property type="match status" value="1"/>
</dbReference>
<dbReference type="PROSITE" id="PS00801">
    <property type="entry name" value="TRANSKETOLASE_1"/>
    <property type="match status" value="1"/>
</dbReference>
<dbReference type="PROSITE" id="PS00802">
    <property type="entry name" value="TRANSKETOLASE_2"/>
    <property type="match status" value="1"/>
</dbReference>
<protein>
    <recommendedName>
        <fullName evidence="1">1-deoxy-D-xylulose-5-phosphate synthase</fullName>
        <ecNumber evidence="1">2.2.1.7</ecNumber>
    </recommendedName>
    <alternativeName>
        <fullName evidence="1">1-deoxyxylulose-5-phosphate synthase</fullName>
        <shortName evidence="1">DXP synthase</shortName>
        <shortName evidence="1">DXPS</shortName>
    </alternativeName>
</protein>
<feature type="chain" id="PRO_0000256415" description="1-deoxy-D-xylulose-5-phosphate synthase">
    <location>
        <begin position="1"/>
        <end position="620"/>
    </location>
</feature>
<feature type="binding site" evidence="1">
    <location>
        <position position="80"/>
    </location>
    <ligand>
        <name>thiamine diphosphate</name>
        <dbReference type="ChEBI" id="CHEBI:58937"/>
    </ligand>
</feature>
<feature type="binding site" evidence="1">
    <location>
        <begin position="121"/>
        <end position="123"/>
    </location>
    <ligand>
        <name>thiamine diphosphate</name>
        <dbReference type="ChEBI" id="CHEBI:58937"/>
    </ligand>
</feature>
<feature type="binding site" evidence="1">
    <location>
        <position position="152"/>
    </location>
    <ligand>
        <name>Mg(2+)</name>
        <dbReference type="ChEBI" id="CHEBI:18420"/>
    </ligand>
</feature>
<feature type="binding site" evidence="1">
    <location>
        <begin position="153"/>
        <end position="154"/>
    </location>
    <ligand>
        <name>thiamine diphosphate</name>
        <dbReference type="ChEBI" id="CHEBI:58937"/>
    </ligand>
</feature>
<feature type="binding site" evidence="1">
    <location>
        <position position="181"/>
    </location>
    <ligand>
        <name>Mg(2+)</name>
        <dbReference type="ChEBI" id="CHEBI:18420"/>
    </ligand>
</feature>
<feature type="binding site" evidence="1">
    <location>
        <position position="181"/>
    </location>
    <ligand>
        <name>thiamine diphosphate</name>
        <dbReference type="ChEBI" id="CHEBI:58937"/>
    </ligand>
</feature>
<feature type="binding site" evidence="1">
    <location>
        <position position="288"/>
    </location>
    <ligand>
        <name>thiamine diphosphate</name>
        <dbReference type="ChEBI" id="CHEBI:58937"/>
    </ligand>
</feature>
<feature type="binding site" evidence="1">
    <location>
        <position position="370"/>
    </location>
    <ligand>
        <name>thiamine diphosphate</name>
        <dbReference type="ChEBI" id="CHEBI:58937"/>
    </ligand>
</feature>
<sequence>MSFDIAKYPTLALVDSTQELRLLPKESLPKLCDELRRYLLDSVSRSSGHFASGLGTVELTVALHYVYNTPFDQLIWDVGHQAYPHKILTGRRDKIGTIRQKGGLHPFPWRGESEYDVLSVGHSSTSISAGIGIAVAAEKEGKNRRTVCVIGDGAITAGMAFEAMNHAGDIRPDMLVVLNDNEMSISENVGALNNHLAQLLSGKLYSSLREGGKKVFSGVPPIKELLKRTEEHIKGMVVPGTLFEELGFNYIGPVDGHDVLGLITTLKNMRDLKGPQFLHIMTKKGRGYEPAEKDPITFHAVPKFDPSSGCLPKSSGGLPSYSKIFGDWLCETAAKDNKLMAITPAMREGSGMVEFSRKFPDRYFDVAIAEQHAVTFAAGLAIGGYKPIVAIYSTFLQRAYDQVLHDVAIQKLPVLFAIDRAGIVGADGQTHQGAFDLSYLRCIPEMVIMTPSDENECRQMLYTGYHYNDGPSAVRYPRGNAVGVELTPLEKLPIGKGIVKCRGEKLAILNFGTLMPEAAKVAESLNATLVDMRFVKPLDEALILEMAASHEALVTVEENAIMGGAGSGVNEVLMAHRKPVSVLNIGLPDFFIPQGTQEEMRAELGLDATGMEAKIKAWLA</sequence>
<comment type="function">
    <text evidence="1">Catalyzes the acyloin condensation reaction between C atoms 2 and 3 of pyruvate and glyceraldehyde 3-phosphate to yield 1-deoxy-D-xylulose-5-phosphate (DXP).</text>
</comment>
<comment type="catalytic activity">
    <reaction evidence="1">
        <text>D-glyceraldehyde 3-phosphate + pyruvate + H(+) = 1-deoxy-D-xylulose 5-phosphate + CO2</text>
        <dbReference type="Rhea" id="RHEA:12605"/>
        <dbReference type="ChEBI" id="CHEBI:15361"/>
        <dbReference type="ChEBI" id="CHEBI:15378"/>
        <dbReference type="ChEBI" id="CHEBI:16526"/>
        <dbReference type="ChEBI" id="CHEBI:57792"/>
        <dbReference type="ChEBI" id="CHEBI:59776"/>
        <dbReference type="EC" id="2.2.1.7"/>
    </reaction>
</comment>
<comment type="cofactor">
    <cofactor evidence="1">
        <name>Mg(2+)</name>
        <dbReference type="ChEBI" id="CHEBI:18420"/>
    </cofactor>
    <text evidence="1">Binds 1 Mg(2+) ion per subunit.</text>
</comment>
<comment type="cofactor">
    <cofactor evidence="1">
        <name>thiamine diphosphate</name>
        <dbReference type="ChEBI" id="CHEBI:58937"/>
    </cofactor>
    <text evidence="1">Binds 1 thiamine pyrophosphate per subunit.</text>
</comment>
<comment type="pathway">
    <text evidence="1">Metabolic intermediate biosynthesis; 1-deoxy-D-xylulose 5-phosphate biosynthesis; 1-deoxy-D-xylulose 5-phosphate from D-glyceraldehyde 3-phosphate and pyruvate: step 1/1.</text>
</comment>
<comment type="subunit">
    <text evidence="1">Homodimer.</text>
</comment>
<comment type="similarity">
    <text evidence="1">Belongs to the transketolase family. DXPS subfamily.</text>
</comment>
<gene>
    <name evidence="1" type="primary">dxs</name>
    <name type="ordered locus">ECP_0479</name>
</gene>
<organism>
    <name type="scientific">Escherichia coli O6:K15:H31 (strain 536 / UPEC)</name>
    <dbReference type="NCBI Taxonomy" id="362663"/>
    <lineage>
        <taxon>Bacteria</taxon>
        <taxon>Pseudomonadati</taxon>
        <taxon>Pseudomonadota</taxon>
        <taxon>Gammaproteobacteria</taxon>
        <taxon>Enterobacterales</taxon>
        <taxon>Enterobacteriaceae</taxon>
        <taxon>Escherichia</taxon>
    </lineage>
</organism>
<evidence type="ECO:0000255" key="1">
    <source>
        <dbReference type="HAMAP-Rule" id="MF_00315"/>
    </source>
</evidence>
<reference key="1">
    <citation type="journal article" date="2006" name="Mol. Microbiol.">
        <title>Role of pathogenicity island-associated integrases in the genome plasticity of uropathogenic Escherichia coli strain 536.</title>
        <authorList>
            <person name="Hochhut B."/>
            <person name="Wilde C."/>
            <person name="Balling G."/>
            <person name="Middendorf B."/>
            <person name="Dobrindt U."/>
            <person name="Brzuszkiewicz E."/>
            <person name="Gottschalk G."/>
            <person name="Carniel E."/>
            <person name="Hacker J."/>
        </authorList>
    </citation>
    <scope>NUCLEOTIDE SEQUENCE [LARGE SCALE GENOMIC DNA]</scope>
    <source>
        <strain>536 / UPEC</strain>
    </source>
</reference>
<proteinExistence type="inferred from homology"/>
<keyword id="KW-0414">Isoprene biosynthesis</keyword>
<keyword id="KW-0460">Magnesium</keyword>
<keyword id="KW-0479">Metal-binding</keyword>
<keyword id="KW-0784">Thiamine biosynthesis</keyword>
<keyword id="KW-0786">Thiamine pyrophosphate</keyword>
<keyword id="KW-0808">Transferase</keyword>
<name>DXS_ECOL5</name>